<comment type="function">
    <text evidence="1">This protein is one of the early assembly proteins of the 50S ribosomal subunit, although it is not seen to bind rRNA by itself. It is important during the early stages of 50S assembly.</text>
</comment>
<comment type="subunit">
    <text evidence="1">Part of the 50S ribosomal subunit.</text>
</comment>
<comment type="similarity">
    <text evidence="1">Belongs to the universal ribosomal protein uL13 family.</text>
</comment>
<organism>
    <name type="scientific">Borrelia duttonii (strain Ly)</name>
    <dbReference type="NCBI Taxonomy" id="412419"/>
    <lineage>
        <taxon>Bacteria</taxon>
        <taxon>Pseudomonadati</taxon>
        <taxon>Spirochaetota</taxon>
        <taxon>Spirochaetia</taxon>
        <taxon>Spirochaetales</taxon>
        <taxon>Borreliaceae</taxon>
        <taxon>Borrelia</taxon>
    </lineage>
</organism>
<keyword id="KW-0687">Ribonucleoprotein</keyword>
<keyword id="KW-0689">Ribosomal protein</keyword>
<gene>
    <name evidence="1" type="primary">rplM</name>
    <name type="ordered locus">BDU_338</name>
</gene>
<sequence>MNKMTNNKTIWMKPRYVKKKWYVIDASDKVLGRIATEAVKILRGKHKPYYTPHQDLGDNVVIINASKVKLTGKKYFQKIYYRHSRYPGGLYSDTYRTLSERKPTAPLEIAIKGMLPKGPLGRELFRNLKVFADANHKLSSQNLYKLEAN</sequence>
<reference key="1">
    <citation type="journal article" date="2008" name="PLoS Genet.">
        <title>The genome of Borrelia recurrentis, the agent of deadly louse-borne relapsing fever, is a degraded subset of tick-borne Borrelia duttonii.</title>
        <authorList>
            <person name="Lescot M."/>
            <person name="Audic S."/>
            <person name="Robert C."/>
            <person name="Nguyen T.T."/>
            <person name="Blanc G."/>
            <person name="Cutler S.J."/>
            <person name="Wincker P."/>
            <person name="Couloux A."/>
            <person name="Claverie J.-M."/>
            <person name="Raoult D."/>
            <person name="Drancourt M."/>
        </authorList>
    </citation>
    <scope>NUCLEOTIDE SEQUENCE [LARGE SCALE GENOMIC DNA]</scope>
    <source>
        <strain>Ly</strain>
    </source>
</reference>
<feature type="chain" id="PRO_1000144094" description="Large ribosomal subunit protein uL13">
    <location>
        <begin position="1"/>
        <end position="149"/>
    </location>
</feature>
<accession>B5RLS4</accession>
<proteinExistence type="inferred from homology"/>
<dbReference type="EMBL" id="CP000976">
    <property type="protein sequence ID" value="ACH93290.1"/>
    <property type="molecule type" value="Genomic_DNA"/>
</dbReference>
<dbReference type="RefSeq" id="WP_012538101.1">
    <property type="nucleotide sequence ID" value="NC_011229.1"/>
</dbReference>
<dbReference type="SMR" id="B5RLS4"/>
<dbReference type="STRING" id="412419.BDU_338"/>
<dbReference type="KEGG" id="bdu:BDU_338"/>
<dbReference type="eggNOG" id="COG0102">
    <property type="taxonomic scope" value="Bacteria"/>
</dbReference>
<dbReference type="HOGENOM" id="CLU_082184_2_2_12"/>
<dbReference type="OrthoDB" id="9801330at2"/>
<dbReference type="Proteomes" id="UP000000611">
    <property type="component" value="Chromosome"/>
</dbReference>
<dbReference type="GO" id="GO:0022625">
    <property type="term" value="C:cytosolic large ribosomal subunit"/>
    <property type="evidence" value="ECO:0007669"/>
    <property type="project" value="TreeGrafter"/>
</dbReference>
<dbReference type="GO" id="GO:0003729">
    <property type="term" value="F:mRNA binding"/>
    <property type="evidence" value="ECO:0007669"/>
    <property type="project" value="TreeGrafter"/>
</dbReference>
<dbReference type="GO" id="GO:0003735">
    <property type="term" value="F:structural constituent of ribosome"/>
    <property type="evidence" value="ECO:0007669"/>
    <property type="project" value="InterPro"/>
</dbReference>
<dbReference type="GO" id="GO:0017148">
    <property type="term" value="P:negative regulation of translation"/>
    <property type="evidence" value="ECO:0007669"/>
    <property type="project" value="TreeGrafter"/>
</dbReference>
<dbReference type="GO" id="GO:0006412">
    <property type="term" value="P:translation"/>
    <property type="evidence" value="ECO:0007669"/>
    <property type="project" value="UniProtKB-UniRule"/>
</dbReference>
<dbReference type="CDD" id="cd00392">
    <property type="entry name" value="Ribosomal_L13"/>
    <property type="match status" value="1"/>
</dbReference>
<dbReference type="Gene3D" id="3.90.1180.10">
    <property type="entry name" value="Ribosomal protein L13"/>
    <property type="match status" value="1"/>
</dbReference>
<dbReference type="HAMAP" id="MF_01366">
    <property type="entry name" value="Ribosomal_uL13"/>
    <property type="match status" value="1"/>
</dbReference>
<dbReference type="InterPro" id="IPR005822">
    <property type="entry name" value="Ribosomal_uL13"/>
</dbReference>
<dbReference type="InterPro" id="IPR005823">
    <property type="entry name" value="Ribosomal_uL13_bac-type"/>
</dbReference>
<dbReference type="InterPro" id="IPR023563">
    <property type="entry name" value="Ribosomal_uL13_CS"/>
</dbReference>
<dbReference type="InterPro" id="IPR036899">
    <property type="entry name" value="Ribosomal_uL13_sf"/>
</dbReference>
<dbReference type="NCBIfam" id="TIGR01066">
    <property type="entry name" value="rplM_bact"/>
    <property type="match status" value="1"/>
</dbReference>
<dbReference type="PANTHER" id="PTHR11545:SF2">
    <property type="entry name" value="LARGE RIBOSOMAL SUBUNIT PROTEIN UL13M"/>
    <property type="match status" value="1"/>
</dbReference>
<dbReference type="PANTHER" id="PTHR11545">
    <property type="entry name" value="RIBOSOMAL PROTEIN L13"/>
    <property type="match status" value="1"/>
</dbReference>
<dbReference type="Pfam" id="PF00572">
    <property type="entry name" value="Ribosomal_L13"/>
    <property type="match status" value="1"/>
</dbReference>
<dbReference type="PIRSF" id="PIRSF002181">
    <property type="entry name" value="Ribosomal_L13"/>
    <property type="match status" value="1"/>
</dbReference>
<dbReference type="SUPFAM" id="SSF52161">
    <property type="entry name" value="Ribosomal protein L13"/>
    <property type="match status" value="1"/>
</dbReference>
<dbReference type="PROSITE" id="PS00783">
    <property type="entry name" value="RIBOSOMAL_L13"/>
    <property type="match status" value="1"/>
</dbReference>
<evidence type="ECO:0000255" key="1">
    <source>
        <dbReference type="HAMAP-Rule" id="MF_01366"/>
    </source>
</evidence>
<evidence type="ECO:0000305" key="2"/>
<protein>
    <recommendedName>
        <fullName evidence="1">Large ribosomal subunit protein uL13</fullName>
    </recommendedName>
    <alternativeName>
        <fullName evidence="2">50S ribosomal protein L13</fullName>
    </alternativeName>
</protein>
<name>RL13_BORDL</name>